<accession>Q196T5</accession>
<keyword id="KW-1185">Reference proteome</keyword>
<gene>
    <name type="ORF">IIV3-125R</name>
</gene>
<organism>
    <name type="scientific">Invertebrate iridescent virus 3</name>
    <name type="common">IIV-3</name>
    <name type="synonym">Mosquito iridescent virus</name>
    <dbReference type="NCBI Taxonomy" id="345201"/>
    <lineage>
        <taxon>Viruses</taxon>
        <taxon>Varidnaviria</taxon>
        <taxon>Bamfordvirae</taxon>
        <taxon>Nucleocytoviricota</taxon>
        <taxon>Megaviricetes</taxon>
        <taxon>Pimascovirales</taxon>
        <taxon>Iridoviridae</taxon>
        <taxon>Betairidovirinae</taxon>
        <taxon>Chloriridovirus</taxon>
    </lineage>
</organism>
<name>125R_IIV3</name>
<feature type="chain" id="PRO_0000377822" description="Uncharacterized protein 125R">
    <location>
        <begin position="1"/>
        <end position="297"/>
    </location>
</feature>
<feature type="region of interest" description="Disordered" evidence="1">
    <location>
        <begin position="1"/>
        <end position="44"/>
    </location>
</feature>
<feature type="compositionally biased region" description="Low complexity" evidence="1">
    <location>
        <begin position="10"/>
        <end position="23"/>
    </location>
</feature>
<feature type="compositionally biased region" description="Basic and acidic residues" evidence="1">
    <location>
        <begin position="26"/>
        <end position="44"/>
    </location>
</feature>
<reference key="1">
    <citation type="journal article" date="2006" name="J. Virol.">
        <title>Genome of invertebrate iridescent virus type 3 (mosquito iridescent virus).</title>
        <authorList>
            <person name="Delhon G."/>
            <person name="Tulman E.R."/>
            <person name="Afonso C.L."/>
            <person name="Lu Z."/>
            <person name="Becnel J.J."/>
            <person name="Moser B.A."/>
            <person name="Kutish G.F."/>
            <person name="Rock D.L."/>
        </authorList>
    </citation>
    <scope>NUCLEOTIDE SEQUENCE [LARGE SCALE GENOMIC DNA]</scope>
</reference>
<sequence length="297" mass="33837">MQKSKSIFIPKAFAPQQQAQAPPSKLDNKDPSVEGEGASKPKDDEYLSENVLSHINSTIEKLVKPYEIFPSEDIRPDLFALVTALEAKMEDCIRRNGDTITGPLRLLTQPAANFDVTNKEYVDWIYSIVNTRLDSKWDRNADIDMNHFKIKNIQTPQELHDAATKAYVDEKVELINNLHTIPTHHLWSKATLVGKKTWFFHPGFICPQTLHLSAIGFSTSPNKYKIGEKTKFGELNPTRLYVVVNQEIRSEHVVEKDVQIGYILKRFETPIVLEEGCNFRLMTESCLPDASVNVSFY</sequence>
<organismHost>
    <name type="scientific">Aedes vexans</name>
    <name type="common">Inland floodwater mosquito</name>
    <name type="synonym">Culex vexans</name>
    <dbReference type="NCBI Taxonomy" id="7163"/>
</organismHost>
<organismHost>
    <name type="scientific">Culex territans</name>
    <dbReference type="NCBI Taxonomy" id="42431"/>
</organismHost>
<organismHost>
    <name type="scientific">Culiseta annulata</name>
    <dbReference type="NCBI Taxonomy" id="332058"/>
</organismHost>
<organismHost>
    <name type="scientific">Ochlerotatus sollicitans</name>
    <name type="common">eastern saltmarsh mosquito</name>
    <dbReference type="NCBI Taxonomy" id="310513"/>
</organismHost>
<organismHost>
    <name type="scientific">Ochlerotatus taeniorhynchus</name>
    <name type="common">Black salt marsh mosquito</name>
    <name type="synonym">Aedes taeniorhynchus</name>
    <dbReference type="NCBI Taxonomy" id="329105"/>
</organismHost>
<organismHost>
    <name type="scientific">Psorophora ferox</name>
    <dbReference type="NCBI Taxonomy" id="7183"/>
</organismHost>
<protein>
    <recommendedName>
        <fullName>Uncharacterized protein 125R</fullName>
    </recommendedName>
</protein>
<proteinExistence type="predicted"/>
<dbReference type="EMBL" id="DQ643392">
    <property type="protein sequence ID" value="ABF82155.1"/>
    <property type="molecule type" value="Genomic_DNA"/>
</dbReference>
<dbReference type="RefSeq" id="YP_654697.1">
    <property type="nucleotide sequence ID" value="NC_008187.1"/>
</dbReference>
<dbReference type="KEGG" id="vg:4156336"/>
<dbReference type="OrthoDB" id="12887at10239"/>
<dbReference type="Proteomes" id="UP000001358">
    <property type="component" value="Genome"/>
</dbReference>
<evidence type="ECO:0000256" key="1">
    <source>
        <dbReference type="SAM" id="MobiDB-lite"/>
    </source>
</evidence>